<organism>
    <name type="scientific">Leuconostoc mesenteroides subsp. mesenteroides (strain ATCC 8293 / DSM 20343 / BCRC 11652 / CCM 1803 / JCM 6124 / NCDO 523 / NBRC 100496 / NCIMB 8023 / NCTC 12954 / NRRL B-1118 / 37Y)</name>
    <dbReference type="NCBI Taxonomy" id="203120"/>
    <lineage>
        <taxon>Bacteria</taxon>
        <taxon>Bacillati</taxon>
        <taxon>Bacillota</taxon>
        <taxon>Bacilli</taxon>
        <taxon>Lactobacillales</taxon>
        <taxon>Lactobacillaceae</taxon>
        <taxon>Leuconostoc</taxon>
    </lineage>
</organism>
<gene>
    <name evidence="1" type="primary">ung</name>
    <name type="ordered locus">LEUM_1467</name>
</gene>
<accession>Q03W63</accession>
<feature type="chain" id="PRO_1000096592" description="Uracil-DNA glycosylase">
    <location>
        <begin position="1"/>
        <end position="220"/>
    </location>
</feature>
<feature type="active site" description="Proton acceptor" evidence="1">
    <location>
        <position position="65"/>
    </location>
</feature>
<reference key="1">
    <citation type="journal article" date="2006" name="Proc. Natl. Acad. Sci. U.S.A.">
        <title>Comparative genomics of the lactic acid bacteria.</title>
        <authorList>
            <person name="Makarova K.S."/>
            <person name="Slesarev A."/>
            <person name="Wolf Y.I."/>
            <person name="Sorokin A."/>
            <person name="Mirkin B."/>
            <person name="Koonin E.V."/>
            <person name="Pavlov A."/>
            <person name="Pavlova N."/>
            <person name="Karamychev V."/>
            <person name="Polouchine N."/>
            <person name="Shakhova V."/>
            <person name="Grigoriev I."/>
            <person name="Lou Y."/>
            <person name="Rohksar D."/>
            <person name="Lucas S."/>
            <person name="Huang K."/>
            <person name="Goodstein D.M."/>
            <person name="Hawkins T."/>
            <person name="Plengvidhya V."/>
            <person name="Welker D."/>
            <person name="Hughes J."/>
            <person name="Goh Y."/>
            <person name="Benson A."/>
            <person name="Baldwin K."/>
            <person name="Lee J.-H."/>
            <person name="Diaz-Muniz I."/>
            <person name="Dosti B."/>
            <person name="Smeianov V."/>
            <person name="Wechter W."/>
            <person name="Barabote R."/>
            <person name="Lorca G."/>
            <person name="Altermann E."/>
            <person name="Barrangou R."/>
            <person name="Ganesan B."/>
            <person name="Xie Y."/>
            <person name="Rawsthorne H."/>
            <person name="Tamir D."/>
            <person name="Parker C."/>
            <person name="Breidt F."/>
            <person name="Broadbent J.R."/>
            <person name="Hutkins R."/>
            <person name="O'Sullivan D."/>
            <person name="Steele J."/>
            <person name="Unlu G."/>
            <person name="Saier M.H. Jr."/>
            <person name="Klaenhammer T."/>
            <person name="Richardson P."/>
            <person name="Kozyavkin S."/>
            <person name="Weimer B.C."/>
            <person name="Mills D.A."/>
        </authorList>
    </citation>
    <scope>NUCLEOTIDE SEQUENCE [LARGE SCALE GENOMIC DNA]</scope>
    <source>
        <strain>ATCC 8293 / DSM 20343 / BCRC 11652 / CCM 1803 / JCM 6124 / NCDO 523 / NBRC 100496 / NCIMB 8023 / NCTC 12954 / NRRL B-1118 / 37Y</strain>
    </source>
</reference>
<name>UNG_LEUMM</name>
<sequence>MPLSHTTWAPAVKAKLNPEYLKQVAQFIQSTYREDAHIFPQQKNIFAALEKTPLPETKVVIMGQDPYHNIGQAQGLSFSVPENVPAPPSLQNILKELSTDVGPRQSHDLTSWSTQGVLLLNAVLTVPEGQANAHQGKIWEPLTDSLIQIASEDDAPKVFILWGKFAQSKRQFIDESKHLVLMSAHPSPLSAYRGFFGSQPFSKANHFLVAKGRQPIDWLK</sequence>
<comment type="function">
    <text evidence="1">Excises uracil residues from the DNA which can arise as a result of misincorporation of dUMP residues by DNA polymerase or due to deamination of cytosine.</text>
</comment>
<comment type="catalytic activity">
    <reaction evidence="1">
        <text>Hydrolyzes single-stranded DNA or mismatched double-stranded DNA and polynucleotides, releasing free uracil.</text>
        <dbReference type="EC" id="3.2.2.27"/>
    </reaction>
</comment>
<comment type="subcellular location">
    <subcellularLocation>
        <location evidence="1">Cytoplasm</location>
    </subcellularLocation>
</comment>
<comment type="similarity">
    <text evidence="1">Belongs to the uracil-DNA glycosylase (UDG) superfamily. UNG family.</text>
</comment>
<keyword id="KW-0963">Cytoplasm</keyword>
<keyword id="KW-0227">DNA damage</keyword>
<keyword id="KW-0234">DNA repair</keyword>
<keyword id="KW-0378">Hydrolase</keyword>
<keyword id="KW-1185">Reference proteome</keyword>
<proteinExistence type="inferred from homology"/>
<evidence type="ECO:0000255" key="1">
    <source>
        <dbReference type="HAMAP-Rule" id="MF_00148"/>
    </source>
</evidence>
<dbReference type="EC" id="3.2.2.27" evidence="1"/>
<dbReference type="EMBL" id="CP000414">
    <property type="protein sequence ID" value="ABJ62559.1"/>
    <property type="molecule type" value="Genomic_DNA"/>
</dbReference>
<dbReference type="RefSeq" id="WP_011680148.1">
    <property type="nucleotide sequence ID" value="NC_008531.1"/>
</dbReference>
<dbReference type="SMR" id="Q03W63"/>
<dbReference type="EnsemblBacteria" id="ABJ62559">
    <property type="protein sequence ID" value="ABJ62559"/>
    <property type="gene ID" value="LEUM_1467"/>
</dbReference>
<dbReference type="GeneID" id="29575995"/>
<dbReference type="KEGG" id="lme:LEUM_1467"/>
<dbReference type="eggNOG" id="COG0692">
    <property type="taxonomic scope" value="Bacteria"/>
</dbReference>
<dbReference type="HOGENOM" id="CLU_032162_3_1_9"/>
<dbReference type="Proteomes" id="UP000000362">
    <property type="component" value="Chromosome"/>
</dbReference>
<dbReference type="GO" id="GO:0005737">
    <property type="term" value="C:cytoplasm"/>
    <property type="evidence" value="ECO:0007669"/>
    <property type="project" value="UniProtKB-SubCell"/>
</dbReference>
<dbReference type="GO" id="GO:0004844">
    <property type="term" value="F:uracil DNA N-glycosylase activity"/>
    <property type="evidence" value="ECO:0007669"/>
    <property type="project" value="UniProtKB-UniRule"/>
</dbReference>
<dbReference type="GO" id="GO:0097510">
    <property type="term" value="P:base-excision repair, AP site formation via deaminated base removal"/>
    <property type="evidence" value="ECO:0007669"/>
    <property type="project" value="TreeGrafter"/>
</dbReference>
<dbReference type="CDD" id="cd10027">
    <property type="entry name" value="UDG-F1-like"/>
    <property type="match status" value="1"/>
</dbReference>
<dbReference type="Gene3D" id="3.40.470.10">
    <property type="entry name" value="Uracil-DNA glycosylase-like domain"/>
    <property type="match status" value="1"/>
</dbReference>
<dbReference type="HAMAP" id="MF_00148">
    <property type="entry name" value="UDG"/>
    <property type="match status" value="1"/>
</dbReference>
<dbReference type="InterPro" id="IPR002043">
    <property type="entry name" value="UDG_fam1"/>
</dbReference>
<dbReference type="InterPro" id="IPR018085">
    <property type="entry name" value="Ura-DNA_Glyclase_AS"/>
</dbReference>
<dbReference type="InterPro" id="IPR005122">
    <property type="entry name" value="Uracil-DNA_glycosylase-like"/>
</dbReference>
<dbReference type="InterPro" id="IPR036895">
    <property type="entry name" value="Uracil-DNA_glycosylase-like_sf"/>
</dbReference>
<dbReference type="NCBIfam" id="NF003588">
    <property type="entry name" value="PRK05254.1-1"/>
    <property type="match status" value="1"/>
</dbReference>
<dbReference type="NCBIfam" id="NF003589">
    <property type="entry name" value="PRK05254.1-2"/>
    <property type="match status" value="1"/>
</dbReference>
<dbReference type="NCBIfam" id="NF003591">
    <property type="entry name" value="PRK05254.1-4"/>
    <property type="match status" value="1"/>
</dbReference>
<dbReference type="NCBIfam" id="NF003592">
    <property type="entry name" value="PRK05254.1-5"/>
    <property type="match status" value="1"/>
</dbReference>
<dbReference type="NCBIfam" id="TIGR00628">
    <property type="entry name" value="ung"/>
    <property type="match status" value="1"/>
</dbReference>
<dbReference type="PANTHER" id="PTHR11264">
    <property type="entry name" value="URACIL-DNA GLYCOSYLASE"/>
    <property type="match status" value="1"/>
</dbReference>
<dbReference type="PANTHER" id="PTHR11264:SF0">
    <property type="entry name" value="URACIL-DNA GLYCOSYLASE"/>
    <property type="match status" value="1"/>
</dbReference>
<dbReference type="Pfam" id="PF03167">
    <property type="entry name" value="UDG"/>
    <property type="match status" value="1"/>
</dbReference>
<dbReference type="SMART" id="SM00986">
    <property type="entry name" value="UDG"/>
    <property type="match status" value="1"/>
</dbReference>
<dbReference type="SMART" id="SM00987">
    <property type="entry name" value="UreE_C"/>
    <property type="match status" value="1"/>
</dbReference>
<dbReference type="SUPFAM" id="SSF52141">
    <property type="entry name" value="Uracil-DNA glycosylase-like"/>
    <property type="match status" value="1"/>
</dbReference>
<dbReference type="PROSITE" id="PS00130">
    <property type="entry name" value="U_DNA_GLYCOSYLASE"/>
    <property type="match status" value="1"/>
</dbReference>
<protein>
    <recommendedName>
        <fullName evidence="1">Uracil-DNA glycosylase</fullName>
        <shortName evidence="1">UDG</shortName>
        <ecNumber evidence="1">3.2.2.27</ecNumber>
    </recommendedName>
</protein>